<proteinExistence type="evidence at protein level"/>
<organism>
    <name type="scientific">Conus textile</name>
    <name type="common">Cloth-of-gold cone</name>
    <dbReference type="NCBI Taxonomy" id="6494"/>
    <lineage>
        <taxon>Eukaryota</taxon>
        <taxon>Metazoa</taxon>
        <taxon>Spiralia</taxon>
        <taxon>Lophotrochozoa</taxon>
        <taxon>Mollusca</taxon>
        <taxon>Gastropoda</taxon>
        <taxon>Caenogastropoda</taxon>
        <taxon>Neogastropoda</taxon>
        <taxon>Conoidea</taxon>
        <taxon>Conidae</taxon>
        <taxon>Conus</taxon>
        <taxon>Cylinder</taxon>
    </lineage>
</organism>
<name>O16A_CONTE</name>
<sequence>MKLTCMMIVAVLFLTAWTFATADDPRNGLGNLFSNAHHEMKNPEASKLNKRWCKQSGEMCNLLDQNCCDGYCIVLVCT</sequence>
<reference key="1">
    <citation type="journal article" date="1990" name="EMBO J.">
        <title>Constant and hypervariable regions in conotoxin propeptides.</title>
        <authorList>
            <person name="Woodward S.R."/>
            <person name="Cruz L.J."/>
            <person name="Olivera B.M."/>
            <person name="Hillyard D.R."/>
        </authorList>
    </citation>
    <scope>NUCLEOTIDE SEQUENCE [MRNA]</scope>
</reference>
<reference key="2">
    <citation type="journal article" date="1989" name="Biochemistry">
        <title>A molluscivorous Conus toxin: conserved frameworks in conotoxins.</title>
        <authorList>
            <person name="Hillyard D.R."/>
            <person name="Olivera B.M."/>
            <person name="Woodward S.R."/>
            <person name="Corpuz G.P."/>
            <person name="Gray W.R."/>
            <person name="Ramilo C.A."/>
            <person name="Cruz L.J."/>
        </authorList>
    </citation>
    <scope>NUCLEOTIDE SEQUENCE [MRNA] OF 49-78</scope>
    <scope>PROTEIN SEQUENCE OF 52-78</scope>
    <scope>SUBCELLULAR LOCATION</scope>
    <scope>FUNCTION</scope>
    <source>
        <tissue>Venom</tissue>
    </source>
</reference>
<reference key="3">
    <citation type="journal article" date="1991" name="Eur. J. Biochem.">
        <title>Mollusc-specific toxins from the venom of Conus textile neovicarius.</title>
        <authorList>
            <person name="Fainzilber M."/>
            <person name="Gordon D."/>
            <person name="Hasson A."/>
            <person name="Spira M.E."/>
            <person name="Zlotkin E."/>
        </authorList>
    </citation>
    <scope>PROTEIN SEQUENCE OF 52-78</scope>
    <scope>SUBCELLULAR LOCATION</scope>
    <source>
        <strain>Neovicarius</strain>
        <tissue>Venom</tissue>
    </source>
</reference>
<reference key="4">
    <citation type="journal article" date="2009" name="Proc. Natl. Acad. Sci. U.S.A.">
        <title>Rapid sensitive analysis of cysteine rich peptide venom components.</title>
        <authorList>
            <person name="Ueberheide B.M."/>
            <person name="Fenyo D."/>
            <person name="Alewood P.F."/>
            <person name="Chait B.T."/>
        </authorList>
    </citation>
    <scope>PROTEIN SEQUENCE OF 52-78</scope>
    <scope>SUBCELLULAR LOCATION</scope>
    <scope>MASS SPECTROMETRY</scope>
    <scope>OXIDATION AT MET-59</scope>
    <source>
        <tissue>Venom</tissue>
    </source>
</reference>
<reference key="5">
    <citation type="journal article" date="1993" name="Eur. J. Neurosci.">
        <title>Alteration of sodium currents by new peptide toxins from the venom of a molluscivorous Conus snail.</title>
        <authorList>
            <person name="Hasson A."/>
            <person name="Fainzilber M."/>
            <person name="Gordon D."/>
            <person name="Zlotkin E."/>
            <person name="Spira M.E."/>
        </authorList>
    </citation>
    <scope>FUNCTION</scope>
</reference>
<reference key="6">
    <citation type="journal article" date="1994" name="J. Biol. Chem.">
        <title>A new neurotoxin receptor site on sodium channels is identified by a conotoxin that affects sodium channel inactivation in molluscs and acts as an antagonist in rat brain.</title>
        <authorList>
            <person name="Fainzilber M."/>
            <person name="Kofman O."/>
            <person name="Zlotkin E."/>
            <person name="Gordon D."/>
        </authorList>
    </citation>
    <scope>FUNCTION</scope>
</reference>
<reference key="7">
    <citation type="journal article" date="2012" name="J. Proteome Res.">
        <title>Constrained de novo sequencing of conotoxins.</title>
        <authorList>
            <person name="Bhatia S."/>
            <person name="Kil Y.J."/>
            <person name="Ueberheide B."/>
            <person name="Chait B.T."/>
            <person name="Tayo L."/>
            <person name="Cruz L."/>
            <person name="Lu B."/>
            <person name="Yates J.R. III"/>
            <person name="Bern M."/>
        </authorList>
    </citation>
    <scope>IDENTIFICATION BY MASS SPECTROMETRY</scope>
    <scope>SUBCELLULAR LOCATION</scope>
    <source>
        <tissue>Venom</tissue>
    </source>
</reference>
<reference key="8">
    <citation type="journal article" date="2002" name="J. Biol. Chem.">
        <title>Three-dimensional solution structure of the sodium channel agonist/antagonist delta-conotoxin TxVIA.</title>
        <authorList>
            <person name="Kohno T."/>
            <person name="Sasaki T."/>
            <person name="Kobayashi K."/>
            <person name="Fainzilber M."/>
            <person name="Sato K."/>
        </authorList>
    </citation>
    <scope>STRUCTURE BY NMR</scope>
    <scope>DISULFIDE BONDS</scope>
</reference>
<comment type="function">
    <text evidence="3 5 6 7">Delta-conotoxins bind to site 6 of voltage-gated sodium channels (Nav) and inhibit the inactivation process. Binding of this toxin is strongly calcium-dependent but not voltage-dependent. The binding site is most likely on the extracellular side of the sodium channel. Binds receptor sites on both mollusk and rat central nervous system, but despite its high affinity binding to rat sodium channel, it has no functional effect in vivo and in vitro on it. Also has no effect on Gambusia fish. Is important in mollusk for the paralysis of the prey. Upon injection of the peptide, a subordinate lobster assumes an exaggerated dominant posture (of a 'King-Kong' lobster!).</text>
</comment>
<comment type="subcellular location">
    <subcellularLocation>
        <location evidence="3 4 5">Secreted</location>
    </subcellularLocation>
</comment>
<comment type="tissue specificity">
    <text evidence="14 15 16">Expressed by the venom duct.</text>
</comment>
<comment type="domain">
    <text evidence="2 4">The presence of a 'disulfide through disulfide knot' structurally defines this protein as a knottin.</text>
</comment>
<comment type="domain">
    <text evidence="13">The cysteine framework is VI/VII (C-C-CC-C-C).</text>
</comment>
<comment type="mass spectrometry">
    <text>Without oxidation at Met-59.</text>
</comment>
<comment type="mass spectrometry">
    <text>With oxidation at Met-59.</text>
</comment>
<comment type="miscellaneous">
    <text>Veratridine increases the rate of dissociation in a dose-dependent manner.</text>
</comment>
<comment type="similarity">
    <text evidence="13">Belongs to the conotoxin O1 superfamily.</text>
</comment>
<comment type="caution">
    <text evidence="13">Several genes are coding for this toxin, it is therefore also shown in entry AC Q9U655.</text>
</comment>
<accession>P18511</accession>
<protein>
    <recommendedName>
        <fullName evidence="8 12">Delta-conotoxin TxVIA</fullName>
    </recommendedName>
    <alternativeName>
        <fullName evidence="10">Conotoxin King-Kong 0</fullName>
        <shortName evidence="17">KK-0</shortName>
    </alternativeName>
    <alternativeName>
        <fullName evidence="9 11">TxIA</fullName>
    </alternativeName>
</protein>
<dbReference type="EMBL" id="X53283">
    <property type="protein sequence ID" value="CAA37377.1"/>
    <property type="molecule type" value="mRNA"/>
</dbReference>
<dbReference type="PIR" id="S12513">
    <property type="entry name" value="S12513"/>
</dbReference>
<dbReference type="PDB" id="1FU3">
    <property type="method" value="NMR"/>
    <property type="chains" value="A=52-78"/>
</dbReference>
<dbReference type="PDBsum" id="1FU3"/>
<dbReference type="SMR" id="P18511"/>
<dbReference type="TCDB" id="8.B.4.1.7">
    <property type="family name" value="the conotoxin t (conotoxin t) family"/>
</dbReference>
<dbReference type="ConoServer" id="598">
    <property type="toxin name" value="TxVIA precursor"/>
</dbReference>
<dbReference type="EvolutionaryTrace" id="P18511"/>
<dbReference type="GO" id="GO:0005576">
    <property type="term" value="C:extracellular region"/>
    <property type="evidence" value="ECO:0007669"/>
    <property type="project" value="UniProtKB-SubCell"/>
</dbReference>
<dbReference type="GO" id="GO:0019871">
    <property type="term" value="F:sodium channel inhibitor activity"/>
    <property type="evidence" value="ECO:0007669"/>
    <property type="project" value="InterPro"/>
</dbReference>
<dbReference type="GO" id="GO:0090729">
    <property type="term" value="F:toxin activity"/>
    <property type="evidence" value="ECO:0007669"/>
    <property type="project" value="UniProtKB-KW"/>
</dbReference>
<dbReference type="InterPro" id="IPR004214">
    <property type="entry name" value="Conotoxin"/>
</dbReference>
<dbReference type="InterPro" id="IPR012322">
    <property type="entry name" value="Conotoxin_d-typ_CS"/>
</dbReference>
<dbReference type="Pfam" id="PF02950">
    <property type="entry name" value="Conotoxin"/>
    <property type="match status" value="1"/>
</dbReference>
<dbReference type="SUPFAM" id="SSF57059">
    <property type="entry name" value="omega toxin-like"/>
    <property type="match status" value="1"/>
</dbReference>
<dbReference type="PROSITE" id="PS60005">
    <property type="entry name" value="DELTA_CONOTOXIN"/>
    <property type="match status" value="1"/>
</dbReference>
<feature type="signal peptide" evidence="1">
    <location>
        <begin position="1"/>
        <end position="22"/>
    </location>
</feature>
<feature type="propeptide" id="PRO_0000034900" evidence="13">
    <location>
        <begin position="23"/>
        <end position="49"/>
    </location>
</feature>
<feature type="peptide" id="PRO_0000034901" description="Delta-conotoxin TxVIA" evidence="3 4 5">
    <location>
        <begin position="52"/>
        <end position="78"/>
    </location>
</feature>
<feature type="modified residue" description="Methionine sulfoxide; partial" evidence="4">
    <location>
        <position position="59"/>
    </location>
</feature>
<feature type="disulfide bond" evidence="2 18">
    <location>
        <begin position="53"/>
        <end position="68"/>
    </location>
</feature>
<feature type="disulfide bond" evidence="2 18">
    <location>
        <begin position="60"/>
        <end position="72"/>
    </location>
</feature>
<feature type="disulfide bond" evidence="2 18">
    <location>
        <begin position="67"/>
        <end position="77"/>
    </location>
</feature>
<feature type="strand" evidence="19">
    <location>
        <begin position="62"/>
        <end position="64"/>
    </location>
</feature>
<feature type="strand" evidence="19">
    <location>
        <begin position="67"/>
        <end position="70"/>
    </location>
</feature>
<evidence type="ECO:0000255" key="1"/>
<evidence type="ECO:0000269" key="2">
    <source>
    </source>
</evidence>
<evidence type="ECO:0000269" key="3">
    <source>
    </source>
</evidence>
<evidence type="ECO:0000269" key="4">
    <source>
    </source>
</evidence>
<evidence type="ECO:0000269" key="5">
    <source>
    </source>
</evidence>
<evidence type="ECO:0000269" key="6">
    <source>
    </source>
</evidence>
<evidence type="ECO:0000269" key="7">
    <source>
    </source>
</evidence>
<evidence type="ECO:0000303" key="8">
    <source>
    </source>
</evidence>
<evidence type="ECO:0000303" key="9">
    <source>
    </source>
</evidence>
<evidence type="ECO:0000303" key="10">
    <source>
    </source>
</evidence>
<evidence type="ECO:0000303" key="11">
    <source>
    </source>
</evidence>
<evidence type="ECO:0000303" key="12">
    <source>
    </source>
</evidence>
<evidence type="ECO:0000305" key="13"/>
<evidence type="ECO:0000305" key="14">
    <source>
    </source>
</evidence>
<evidence type="ECO:0000305" key="15">
    <source>
    </source>
</evidence>
<evidence type="ECO:0000305" key="16">
    <source>
    </source>
</evidence>
<evidence type="ECO:0000312" key="17">
    <source>
        <dbReference type="EMBL" id="CAA37377.1"/>
    </source>
</evidence>
<evidence type="ECO:0000312" key="18">
    <source>
        <dbReference type="PDB" id="1FU3"/>
    </source>
</evidence>
<evidence type="ECO:0007829" key="19">
    <source>
        <dbReference type="PDB" id="1FU3"/>
    </source>
</evidence>
<keyword id="KW-0002">3D-structure</keyword>
<keyword id="KW-0165">Cleavage on pair of basic residues</keyword>
<keyword id="KW-0903">Direct protein sequencing</keyword>
<keyword id="KW-1015">Disulfide bond</keyword>
<keyword id="KW-0872">Ion channel impairing toxin</keyword>
<keyword id="KW-0960">Knottin</keyword>
<keyword id="KW-0528">Neurotoxin</keyword>
<keyword id="KW-0558">Oxidation</keyword>
<keyword id="KW-0964">Secreted</keyword>
<keyword id="KW-0732">Signal</keyword>
<keyword id="KW-0800">Toxin</keyword>
<keyword id="KW-0738">Voltage-gated sodium channel impairing toxin</keyword>